<accession>Q87AD3</accession>
<evidence type="ECO:0000250" key="1"/>
<evidence type="ECO:0000255" key="2"/>
<evidence type="ECO:0000305" key="3"/>
<organism>
    <name type="scientific">Xylella fastidiosa (strain Temecula1 / ATCC 700964)</name>
    <dbReference type="NCBI Taxonomy" id="183190"/>
    <lineage>
        <taxon>Bacteria</taxon>
        <taxon>Pseudomonadati</taxon>
        <taxon>Pseudomonadota</taxon>
        <taxon>Gammaproteobacteria</taxon>
        <taxon>Lysobacterales</taxon>
        <taxon>Lysobacteraceae</taxon>
        <taxon>Xylella</taxon>
    </lineage>
</organism>
<reference key="1">
    <citation type="journal article" date="2003" name="J. Bacteriol.">
        <title>Comparative analyses of the complete genome sequences of Pierce's disease and citrus variegated chlorosis strains of Xylella fastidiosa.</title>
        <authorList>
            <person name="Van Sluys M.A."/>
            <person name="de Oliveira M.C."/>
            <person name="Monteiro-Vitorello C.B."/>
            <person name="Miyaki C.Y."/>
            <person name="Furlan L.R."/>
            <person name="Camargo L.E.A."/>
            <person name="da Silva A.C.R."/>
            <person name="Moon D.H."/>
            <person name="Takita M.A."/>
            <person name="Lemos E.G.M."/>
            <person name="Machado M.A."/>
            <person name="Ferro M.I.T."/>
            <person name="da Silva F.R."/>
            <person name="Goldman M.H.S."/>
            <person name="Goldman G.H."/>
            <person name="Lemos M.V.F."/>
            <person name="El-Dorry H."/>
            <person name="Tsai S.M."/>
            <person name="Carrer H."/>
            <person name="Carraro D.M."/>
            <person name="de Oliveira R.C."/>
            <person name="Nunes L.R."/>
            <person name="Siqueira W.J."/>
            <person name="Coutinho L.L."/>
            <person name="Kimura E.T."/>
            <person name="Ferro E.S."/>
            <person name="Harakava R."/>
            <person name="Kuramae E.E."/>
            <person name="Marino C.L."/>
            <person name="Giglioti E."/>
            <person name="Abreu I.L."/>
            <person name="Alves L.M.C."/>
            <person name="do Amaral A.M."/>
            <person name="Baia G.S."/>
            <person name="Blanco S.R."/>
            <person name="Brito M.S."/>
            <person name="Cannavan F.S."/>
            <person name="Celestino A.V."/>
            <person name="da Cunha A.F."/>
            <person name="Fenille R.C."/>
            <person name="Ferro J.A."/>
            <person name="Formighieri E.F."/>
            <person name="Kishi L.T."/>
            <person name="Leoni S.G."/>
            <person name="Oliveira A.R."/>
            <person name="Rosa V.E. Jr."/>
            <person name="Sassaki F.T."/>
            <person name="Sena J.A.D."/>
            <person name="de Souza A.A."/>
            <person name="Truffi D."/>
            <person name="Tsukumo F."/>
            <person name="Yanai G.M."/>
            <person name="Zaros L.G."/>
            <person name="Civerolo E.L."/>
            <person name="Simpson A.J.G."/>
            <person name="Almeida N.F. Jr."/>
            <person name="Setubal J.C."/>
            <person name="Kitajima J.P."/>
        </authorList>
    </citation>
    <scope>NUCLEOTIDE SEQUENCE [LARGE SCALE GENOMIC DNA]</scope>
    <source>
        <strain>Temecula1 / ATCC 700964</strain>
    </source>
</reference>
<proteinExistence type="inferred from homology"/>
<dbReference type="EMBL" id="AE009442">
    <property type="protein sequence ID" value="AAO29724.1"/>
    <property type="molecule type" value="Genomic_DNA"/>
</dbReference>
<dbReference type="RefSeq" id="WP_004090438.1">
    <property type="nucleotide sequence ID" value="NC_004556.1"/>
</dbReference>
<dbReference type="KEGG" id="xft:PD_1893"/>
<dbReference type="HOGENOM" id="CLU_037802_2_1_6"/>
<dbReference type="Proteomes" id="UP000002516">
    <property type="component" value="Chromosome"/>
</dbReference>
<dbReference type="GO" id="GO:0005886">
    <property type="term" value="C:plasma membrane"/>
    <property type="evidence" value="ECO:0007669"/>
    <property type="project" value="UniProtKB-SubCell"/>
</dbReference>
<dbReference type="InterPro" id="IPR046513">
    <property type="entry name" value="DUF6691"/>
</dbReference>
<dbReference type="Pfam" id="PF20398">
    <property type="entry name" value="DUF6691"/>
    <property type="match status" value="1"/>
</dbReference>
<keyword id="KW-0997">Cell inner membrane</keyword>
<keyword id="KW-1003">Cell membrane</keyword>
<keyword id="KW-0472">Membrane</keyword>
<keyword id="KW-1185">Reference proteome</keyword>
<keyword id="KW-0812">Transmembrane</keyword>
<keyword id="KW-1133">Transmembrane helix</keyword>
<keyword id="KW-0813">Transport</keyword>
<sequence length="148" mass="15810">MNLHFYSTLRFTVALAAGLLFGFGLALSEMINPIRVLSFLNVASGHWNPSLLFVLGSALAVAFPGMALQRRLKRPLLDECFHLPSKKVIDRRIVFGSAIFGTGWGLTGLCPGPAIASLSTGLGSVLLFVAAMAAGMIIHDRIVVRSLS</sequence>
<protein>
    <recommendedName>
        <fullName evidence="3">Probable transporter PD_1893</fullName>
    </recommendedName>
</protein>
<comment type="subcellular location">
    <subcellularLocation>
        <location evidence="3">Cell inner membrane</location>
        <topology evidence="2">Multi-pass membrane protein</topology>
    </subcellularLocation>
</comment>
<comment type="induction">
    <text evidence="1">Repressed by BigR.</text>
</comment>
<comment type="miscellaneous">
    <text>Probably part of an operon that comprises bigR, blh, PD_1892 and PD_1894.</text>
</comment>
<comment type="similarity">
    <text evidence="3">Belongs to the TsuA/YedE (TC 9.B.102) family.</text>
</comment>
<feature type="chain" id="PRO_0000305332" description="Probable transporter PD_1893">
    <location>
        <begin position="1"/>
        <end position="148"/>
    </location>
</feature>
<feature type="transmembrane region" description="Helical" evidence="2">
    <location>
        <begin position="11"/>
        <end position="31"/>
    </location>
</feature>
<feature type="transmembrane region" description="Helical" evidence="2">
    <location>
        <begin position="48"/>
        <end position="68"/>
    </location>
</feature>
<feature type="transmembrane region" description="Helical" evidence="2">
    <location>
        <begin position="93"/>
        <end position="113"/>
    </location>
</feature>
<feature type="transmembrane region" description="Helical" evidence="2">
    <location>
        <begin position="118"/>
        <end position="138"/>
    </location>
</feature>
<gene>
    <name type="ordered locus">PD_1893</name>
</gene>
<name>Y1893_XYLFT</name>